<reference key="1">
    <citation type="submission" date="2004-11" db="EMBL/GenBank/DDBJ databases">
        <title>Complete genome sequence of Thermus thermophilus HB8.</title>
        <authorList>
            <person name="Masui R."/>
            <person name="Kurokawa K."/>
            <person name="Nakagawa N."/>
            <person name="Tokunaga F."/>
            <person name="Koyama Y."/>
            <person name="Shibata T."/>
            <person name="Oshima T."/>
            <person name="Yokoyama S."/>
            <person name="Yasunaga T."/>
            <person name="Kuramitsu S."/>
        </authorList>
    </citation>
    <scope>NUCLEOTIDE SEQUENCE [LARGE SCALE GENOMIC DNA]</scope>
    <source>
        <strain>ATCC 27634 / DSM 579 / HB8</strain>
    </source>
</reference>
<reference key="2">
    <citation type="submission" date="2009-09" db="PDB data bank">
        <title>Crystal structure of a domain of functionally unknown protein from Thermus thermophilus HB8.</title>
        <authorList>
            <person name="Chang C."/>
            <person name="Li H."/>
            <person name="Clancy S."/>
            <person name="Joachimiak A."/>
        </authorList>
    </citation>
    <scope>X-RAY CRYSTALLOGRAPHY (2.15 ANGSTROMS) OF 138-269</scope>
</reference>
<accession>Q5SKV3</accession>
<dbReference type="EC" id="3.1.-.-"/>
<dbReference type="EMBL" id="AP008226">
    <property type="protein sequence ID" value="BAD70363.1"/>
    <property type="molecule type" value="Genomic_DNA"/>
</dbReference>
<dbReference type="RefSeq" id="WP_011228012.1">
    <property type="nucleotide sequence ID" value="NC_006461.1"/>
</dbReference>
<dbReference type="RefSeq" id="YP_143806.1">
    <property type="nucleotide sequence ID" value="NC_006461.1"/>
</dbReference>
<dbReference type="PDB" id="3IX7">
    <property type="method" value="X-ray"/>
    <property type="resolution" value="2.15 A"/>
    <property type="chains" value="A/B=138-269"/>
</dbReference>
<dbReference type="PDBsum" id="3IX7"/>
<dbReference type="SMR" id="Q5SKV3"/>
<dbReference type="DNASU" id="3168801"/>
<dbReference type="EnsemblBacteria" id="BAD70363">
    <property type="protein sequence ID" value="BAD70363"/>
    <property type="gene ID" value="BAD70363"/>
</dbReference>
<dbReference type="GeneID" id="3168801"/>
<dbReference type="KEGG" id="ttj:TTHA0540"/>
<dbReference type="PATRIC" id="fig|300852.9.peg.539"/>
<dbReference type="eggNOG" id="COG4956">
    <property type="taxonomic scope" value="Bacteria"/>
</dbReference>
<dbReference type="HOGENOM" id="CLU_050839_0_0_0"/>
<dbReference type="PhylomeDB" id="Q5SKV3"/>
<dbReference type="EvolutionaryTrace" id="Q5SKV3"/>
<dbReference type="Proteomes" id="UP000000532">
    <property type="component" value="Chromosome"/>
</dbReference>
<dbReference type="GO" id="GO:0016020">
    <property type="term" value="C:membrane"/>
    <property type="evidence" value="ECO:0007669"/>
    <property type="project" value="UniProtKB-SubCell"/>
</dbReference>
<dbReference type="GO" id="GO:0046872">
    <property type="term" value="F:metal ion binding"/>
    <property type="evidence" value="ECO:0007669"/>
    <property type="project" value="UniProtKB-KW"/>
</dbReference>
<dbReference type="GO" id="GO:0004518">
    <property type="term" value="F:nuclease activity"/>
    <property type="evidence" value="ECO:0007669"/>
    <property type="project" value="UniProtKB-KW"/>
</dbReference>
<dbReference type="CDD" id="cd09877">
    <property type="entry name" value="PIN_YacL-like"/>
    <property type="match status" value="1"/>
</dbReference>
<dbReference type="Gene3D" id="3.40.50.1010">
    <property type="entry name" value="5'-nuclease"/>
    <property type="match status" value="1"/>
</dbReference>
<dbReference type="InterPro" id="IPR052041">
    <property type="entry name" value="Nucleic_acid_metab_PIN/TRAM"/>
</dbReference>
<dbReference type="InterPro" id="IPR029060">
    <property type="entry name" value="PIN-like_dom_sf"/>
</dbReference>
<dbReference type="InterPro" id="IPR002716">
    <property type="entry name" value="PIN_dom"/>
</dbReference>
<dbReference type="InterPro" id="IPR002792">
    <property type="entry name" value="TRAM_dom"/>
</dbReference>
<dbReference type="PANTHER" id="PTHR11603">
    <property type="entry name" value="AAA FAMILY ATPASE"/>
    <property type="match status" value="1"/>
</dbReference>
<dbReference type="PANTHER" id="PTHR11603:SF147">
    <property type="entry name" value="MEMBRANE PROTEIN"/>
    <property type="match status" value="1"/>
</dbReference>
<dbReference type="Pfam" id="PF01850">
    <property type="entry name" value="PIN"/>
    <property type="match status" value="1"/>
</dbReference>
<dbReference type="Pfam" id="PF01938">
    <property type="entry name" value="TRAM"/>
    <property type="match status" value="1"/>
</dbReference>
<dbReference type="SUPFAM" id="SSF88723">
    <property type="entry name" value="PIN domain-like"/>
    <property type="match status" value="1"/>
</dbReference>
<dbReference type="PROSITE" id="PS50926">
    <property type="entry name" value="TRAM"/>
    <property type="match status" value="1"/>
</dbReference>
<organism>
    <name type="scientific">Thermus thermophilus (strain ATCC 27634 / DSM 579 / HB8)</name>
    <dbReference type="NCBI Taxonomy" id="300852"/>
    <lineage>
        <taxon>Bacteria</taxon>
        <taxon>Thermotogati</taxon>
        <taxon>Deinococcota</taxon>
        <taxon>Deinococci</taxon>
        <taxon>Thermales</taxon>
        <taxon>Thermaceae</taxon>
        <taxon>Thermus</taxon>
    </lineage>
</organism>
<keyword id="KW-0002">3D-structure</keyword>
<keyword id="KW-0378">Hydrolase</keyword>
<keyword id="KW-0460">Magnesium</keyword>
<keyword id="KW-0472">Membrane</keyword>
<keyword id="KW-0479">Metal-binding</keyword>
<keyword id="KW-0540">Nuclease</keyword>
<keyword id="KW-1185">Reference proteome</keyword>
<keyword id="KW-0732">Signal</keyword>
<keyword id="KW-1277">Toxin-antitoxin system</keyword>
<keyword id="KW-0812">Transmembrane</keyword>
<keyword id="KW-1133">Transmembrane helix</keyword>
<proteinExistence type="evidence at protein level"/>
<comment type="function">
    <text evidence="3">Part of a toxin-antitoxin (TA) system. An RNase.</text>
</comment>
<comment type="cofactor">
    <cofactor evidence="3">
        <name>Mg(2+)</name>
        <dbReference type="ChEBI" id="CHEBI:18420"/>
    </cofactor>
</comment>
<comment type="subcellular location">
    <subcellularLocation>
        <location evidence="3">Membrane</location>
        <topology evidence="3">Multi-pass membrane protein</topology>
    </subcellularLocation>
</comment>
<comment type="similarity">
    <text evidence="3">Belongs to the PINc/VapC protein family.</text>
</comment>
<sequence>MKTRHLVYLAFALLGLGLAGLLEDWGLLPQSPSLLSLNRLYLALAGLLTGLLLGPRLEGALEARLKRLRSLPPEVVVATTLGSTIGLLLAVLLTTLLAQVPGFSPVHSLLLALGLVALFVYLALGYRAYFRLPEPKPAPRGGKVLDTSVLVDGRVAEVAAVGFLEGPLWVPHFVLKELQHFADSQDPLRRAKGRRGLETLERLREAAPLEVLETTPKGESVDEKLLFLARDLEAALVTNDHALLQMARIYGVKALSIQALAQALRPQLQVGDTLKLLILKEGKEPHQGVGYLEDGSMVVVDGGSRYRGQEIEVVVTQAIQTQVGRLFFARPAQGAQ</sequence>
<evidence type="ECO:0000255" key="1"/>
<evidence type="ECO:0000255" key="2">
    <source>
        <dbReference type="PROSITE-ProRule" id="PRU00208"/>
    </source>
</evidence>
<evidence type="ECO:0000305" key="3"/>
<evidence type="ECO:0007829" key="4">
    <source>
        <dbReference type="PDB" id="3IX7"/>
    </source>
</evidence>
<name>Y540_THET8</name>
<gene>
    <name type="ordered locus">TTHA0540</name>
</gene>
<protein>
    <recommendedName>
        <fullName>Uncharacterized PIN and TRAM-domain containing protein TTHA0540</fullName>
    </recommendedName>
    <alternativeName>
        <fullName>Putative RNase TTHA0540</fullName>
        <ecNumber>3.1.-.-</ecNumber>
    </alternativeName>
</protein>
<feature type="signal peptide" evidence="1">
    <location>
        <begin position="1"/>
        <end position="23"/>
    </location>
</feature>
<feature type="chain" id="PRO_0000407901" description="Uncharacterized PIN and TRAM-domain containing protein TTHA0540">
    <location>
        <begin position="24"/>
        <end position="336"/>
    </location>
</feature>
<feature type="transmembrane region" description="Helical" evidence="1">
    <location>
        <begin position="34"/>
        <end position="54"/>
    </location>
</feature>
<feature type="transmembrane region" description="Helical" evidence="1">
    <location>
        <begin position="75"/>
        <end position="95"/>
    </location>
</feature>
<feature type="transmembrane region" description="Helical" evidence="1">
    <location>
        <begin position="106"/>
        <end position="126"/>
    </location>
</feature>
<feature type="domain" description="PINc">
    <location>
        <begin position="144"/>
        <end position="255"/>
    </location>
</feature>
<feature type="domain" description="TRAM" evidence="2">
    <location>
        <begin position="267"/>
        <end position="328"/>
    </location>
</feature>
<feature type="binding site" evidence="1">
    <location>
        <position position="222"/>
    </location>
    <ligand>
        <name>Mg(2+)</name>
        <dbReference type="ChEBI" id="CHEBI:18420"/>
    </ligand>
</feature>
<feature type="strand" evidence="4">
    <location>
        <begin position="143"/>
        <end position="145"/>
    </location>
</feature>
<feature type="helix" evidence="4">
    <location>
        <begin position="147"/>
        <end position="152"/>
    </location>
</feature>
<feature type="helix" evidence="4">
    <location>
        <begin position="154"/>
        <end position="159"/>
    </location>
</feature>
<feature type="turn" evidence="4">
    <location>
        <begin position="160"/>
        <end position="162"/>
    </location>
</feature>
<feature type="strand" evidence="4">
    <location>
        <begin position="168"/>
        <end position="171"/>
    </location>
</feature>
<feature type="helix" evidence="4">
    <location>
        <begin position="172"/>
        <end position="182"/>
    </location>
</feature>
<feature type="helix" evidence="4">
    <location>
        <begin position="187"/>
        <end position="206"/>
    </location>
</feature>
<feature type="strand" evidence="4">
    <location>
        <begin position="209"/>
        <end position="212"/>
    </location>
</feature>
<feature type="helix" evidence="4">
    <location>
        <begin position="221"/>
        <end position="231"/>
    </location>
</feature>
<feature type="strand" evidence="4">
    <location>
        <begin position="235"/>
        <end position="239"/>
    </location>
</feature>
<feature type="helix" evidence="4">
    <location>
        <begin position="241"/>
        <end position="249"/>
    </location>
</feature>
<feature type="strand" evidence="4">
    <location>
        <begin position="254"/>
        <end position="256"/>
    </location>
</feature>
<feature type="helix" evidence="4">
    <location>
        <begin position="257"/>
        <end position="263"/>
    </location>
</feature>